<dbReference type="GO" id="GO:0005576">
    <property type="term" value="C:extracellular region"/>
    <property type="evidence" value="ECO:0000314"/>
    <property type="project" value="UniProtKB"/>
</dbReference>
<evidence type="ECO:0000255" key="1"/>
<evidence type="ECO:0000269" key="2">
    <source>
    </source>
</evidence>
<evidence type="ECO:0000303" key="3">
    <source>
    </source>
</evidence>
<evidence type="ECO:0000305" key="4"/>
<evidence type="ECO:0000305" key="5">
    <source>
    </source>
</evidence>
<accession>P86309</accession>
<name>TLP12_PHONI</name>
<organism>
    <name type="scientific">Phoneutria nigriventer</name>
    <name type="common">Brazilian armed spider</name>
    <name type="synonym">Ctenus nigriventer</name>
    <dbReference type="NCBI Taxonomy" id="6918"/>
    <lineage>
        <taxon>Eukaryota</taxon>
        <taxon>Metazoa</taxon>
        <taxon>Ecdysozoa</taxon>
        <taxon>Arthropoda</taxon>
        <taxon>Chelicerata</taxon>
        <taxon>Arachnida</taxon>
        <taxon>Araneae</taxon>
        <taxon>Araneomorphae</taxon>
        <taxon>Entelegynae</taxon>
        <taxon>Lycosoidea</taxon>
        <taxon>Ctenidae</taxon>
        <taxon>Phoneutria</taxon>
    </lineage>
</organism>
<feature type="peptide" id="PRO_0000402822" description="Tachykinin-like peptide-XII" evidence="2">
    <location>
        <begin position="1"/>
        <end position="13"/>
    </location>
</feature>
<feature type="modified residue" description="Pyrrolidone carboxylic acid" evidence="2">
    <location>
        <position position="1"/>
    </location>
</feature>
<feature type="modified residue" description="Phenylalanine amide" evidence="2">
    <location>
        <position position="13"/>
    </location>
</feature>
<sequence length="13" mass="1645">QKKDKKDKFYGLF</sequence>
<proteinExistence type="evidence at protein level"/>
<protein>
    <recommendedName>
        <fullName evidence="5">Tachykinin-like peptide-XII</fullName>
    </recommendedName>
    <alternativeName>
        <fullName evidence="3">P.nigriventer tachykinin peptides XII</fullName>
        <shortName evidence="3">PnTkP-XII</shortName>
    </alternativeName>
    <alternativeName>
        <fullName evidence="4">U29-ctenitoxin-Pn1l</fullName>
        <shortName evidence="4">U29-CNTX-Pn1l</shortName>
    </alternativeName>
</protein>
<comment type="subcellular location">
    <subcellularLocation>
        <location evidence="2">Secreted</location>
    </subcellularLocation>
</comment>
<comment type="tissue specificity">
    <text evidence="2">Expressed by the venom gland.</text>
</comment>
<comment type="mass spectrometry" mass="1626.36" method="Electrospray" evidence="2"/>
<comment type="similarity">
    <text evidence="1">Belongs to the tachykinin family.</text>
</comment>
<reference evidence="4" key="1">
    <citation type="journal article" date="2005" name="Rapid Commun. Mass Spectrom.">
        <title>Electrospray ionization quadrupole time-of-flight and matrix-assisted laser desorption/ionization tandem time-of-flight mass spectrometric analyses to solve micro-heterogeneity in post-translationally modified peptides from Phoneutria nigriventer (Aranea, Ctenidae) venom.</title>
        <authorList>
            <person name="Pimenta A.M.C."/>
            <person name="Rates B."/>
            <person name="Bloch C. Jr."/>
            <person name="Gomes P.C."/>
            <person name="Santoro M.M."/>
            <person name="de Lima M.E."/>
            <person name="Richardson M."/>
            <person name="Cordeiro M.N."/>
        </authorList>
    </citation>
    <scope>PROTEIN SEQUENCE</scope>
    <scope>SUBCELLULAR LOCATION</scope>
    <scope>TISSUE SPECIFICITY</scope>
    <scope>MASS SPECTROMETRY</scope>
    <scope>PYROGLUTAMATE FORMATION AT GLN-1</scope>
    <scope>AMIDATION AT PHE-13</scope>
    <source>
        <tissue evidence="2">Venom</tissue>
    </source>
</reference>
<keyword id="KW-0027">Amidation</keyword>
<keyword id="KW-0903">Direct protein sequencing</keyword>
<keyword id="KW-0873">Pyrrolidone carboxylic acid</keyword>
<keyword id="KW-0964">Secreted</keyword>